<protein>
    <recommendedName>
        <fullName>Cytochrome P450 4p1</fullName>
        <ecNumber>1.14.-.-</ecNumber>
    </recommendedName>
    <alternativeName>
        <fullName>CYPIVP1</fullName>
    </alternativeName>
</protein>
<accession>Q9V558</accession>
<accession>Q24125</accession>
<dbReference type="EC" id="1.14.-.-"/>
<dbReference type="EMBL" id="AE013599">
    <property type="protein sequence ID" value="AAF58962.1"/>
    <property type="molecule type" value="Genomic_DNA"/>
</dbReference>
<dbReference type="EMBL" id="AY071584">
    <property type="protein sequence ID" value="AAL49206.1"/>
    <property type="molecule type" value="mRNA"/>
</dbReference>
<dbReference type="EMBL" id="U34327">
    <property type="protein sequence ID" value="AAA80661.1"/>
    <property type="molecule type" value="mRNA"/>
</dbReference>
<dbReference type="PIR" id="S70624">
    <property type="entry name" value="S70624"/>
</dbReference>
<dbReference type="RefSeq" id="NP_524828.1">
    <property type="nucleotide sequence ID" value="NM_080089.3"/>
</dbReference>
<dbReference type="SMR" id="Q9V558"/>
<dbReference type="BioGRID" id="69739">
    <property type="interactions" value="1"/>
</dbReference>
<dbReference type="DIP" id="DIP-18909N"/>
<dbReference type="FunCoup" id="Q9V558">
    <property type="interactions" value="1"/>
</dbReference>
<dbReference type="IntAct" id="Q9V558">
    <property type="interactions" value="3"/>
</dbReference>
<dbReference type="STRING" id="7227.FBpp0087673"/>
<dbReference type="PaxDb" id="7227-FBpp0087673"/>
<dbReference type="EnsemblMetazoa" id="FBtr0088592">
    <property type="protein sequence ID" value="FBpp0087673"/>
    <property type="gene ID" value="FBgn0015037"/>
</dbReference>
<dbReference type="GeneID" id="45524"/>
<dbReference type="KEGG" id="dme:Dmel_CG10842"/>
<dbReference type="AGR" id="FB:FBgn0015037"/>
<dbReference type="CTD" id="45524"/>
<dbReference type="FlyBase" id="FBgn0015037">
    <property type="gene designation" value="Cyp4p1"/>
</dbReference>
<dbReference type="VEuPathDB" id="VectorBase:FBgn0015037"/>
<dbReference type="eggNOG" id="KOG0157">
    <property type="taxonomic scope" value="Eukaryota"/>
</dbReference>
<dbReference type="GeneTree" id="ENSGT00940000167779"/>
<dbReference type="HOGENOM" id="CLU_001570_5_1_1"/>
<dbReference type="InParanoid" id="Q9V558"/>
<dbReference type="OMA" id="YSITCYA"/>
<dbReference type="OrthoDB" id="1470350at2759"/>
<dbReference type="PhylomeDB" id="Q9V558"/>
<dbReference type="Reactome" id="R-DME-193144">
    <property type="pathway name" value="Estrogen biosynthesis"/>
</dbReference>
<dbReference type="Reactome" id="R-DME-211976">
    <property type="pathway name" value="Endogenous sterols"/>
</dbReference>
<dbReference type="SignaLink" id="Q9V558"/>
<dbReference type="BioGRID-ORCS" id="45524">
    <property type="hits" value="0 hits in 3 CRISPR screens"/>
</dbReference>
<dbReference type="GenomeRNAi" id="45524"/>
<dbReference type="PRO" id="PR:Q9V558"/>
<dbReference type="Proteomes" id="UP000000803">
    <property type="component" value="Chromosome 2R"/>
</dbReference>
<dbReference type="Bgee" id="FBgn0015037">
    <property type="expression patterns" value="Expressed in visual pigment cell (sensu Nematoda and Protostomia) in testis and 142 other cell types or tissues"/>
</dbReference>
<dbReference type="GO" id="GO:0005789">
    <property type="term" value="C:endoplasmic reticulum membrane"/>
    <property type="evidence" value="ECO:0007669"/>
    <property type="project" value="UniProtKB-SubCell"/>
</dbReference>
<dbReference type="GO" id="GO:0020037">
    <property type="term" value="F:heme binding"/>
    <property type="evidence" value="ECO:0007669"/>
    <property type="project" value="InterPro"/>
</dbReference>
<dbReference type="GO" id="GO:0005506">
    <property type="term" value="F:iron ion binding"/>
    <property type="evidence" value="ECO:0007669"/>
    <property type="project" value="InterPro"/>
</dbReference>
<dbReference type="GO" id="GO:0004497">
    <property type="term" value="F:monooxygenase activity"/>
    <property type="evidence" value="ECO:0007669"/>
    <property type="project" value="UniProtKB-KW"/>
</dbReference>
<dbReference type="GO" id="GO:0016705">
    <property type="term" value="F:oxidoreductase activity, acting on paired donors, with incorporation or reduction of molecular oxygen"/>
    <property type="evidence" value="ECO:0007669"/>
    <property type="project" value="InterPro"/>
</dbReference>
<dbReference type="CDD" id="cd20628">
    <property type="entry name" value="CYP4"/>
    <property type="match status" value="1"/>
</dbReference>
<dbReference type="Gene3D" id="1.10.630.10">
    <property type="entry name" value="Cytochrome P450"/>
    <property type="match status" value="1"/>
</dbReference>
<dbReference type="InterPro" id="IPR001128">
    <property type="entry name" value="Cyt_P450"/>
</dbReference>
<dbReference type="InterPro" id="IPR017972">
    <property type="entry name" value="Cyt_P450_CS"/>
</dbReference>
<dbReference type="InterPro" id="IPR002401">
    <property type="entry name" value="Cyt_P450_E_grp-I"/>
</dbReference>
<dbReference type="InterPro" id="IPR036396">
    <property type="entry name" value="Cyt_P450_sf"/>
</dbReference>
<dbReference type="InterPro" id="IPR050196">
    <property type="entry name" value="Cytochrome_P450_Monoox"/>
</dbReference>
<dbReference type="PANTHER" id="PTHR24291:SF105">
    <property type="entry name" value="CYTOCHROME P450 4P1-RELATED"/>
    <property type="match status" value="1"/>
</dbReference>
<dbReference type="PANTHER" id="PTHR24291">
    <property type="entry name" value="CYTOCHROME P450 FAMILY 4"/>
    <property type="match status" value="1"/>
</dbReference>
<dbReference type="Pfam" id="PF00067">
    <property type="entry name" value="p450"/>
    <property type="match status" value="1"/>
</dbReference>
<dbReference type="PRINTS" id="PR00463">
    <property type="entry name" value="EP450I"/>
</dbReference>
<dbReference type="PRINTS" id="PR00385">
    <property type="entry name" value="P450"/>
</dbReference>
<dbReference type="SUPFAM" id="SSF48264">
    <property type="entry name" value="Cytochrome P450"/>
    <property type="match status" value="1"/>
</dbReference>
<dbReference type="PROSITE" id="PS00086">
    <property type="entry name" value="CYTOCHROME_P450"/>
    <property type="match status" value="1"/>
</dbReference>
<name>CP4P1_DROME</name>
<organism>
    <name type="scientific">Drosophila melanogaster</name>
    <name type="common">Fruit fly</name>
    <dbReference type="NCBI Taxonomy" id="7227"/>
    <lineage>
        <taxon>Eukaryota</taxon>
        <taxon>Metazoa</taxon>
        <taxon>Ecdysozoa</taxon>
        <taxon>Arthropoda</taxon>
        <taxon>Hexapoda</taxon>
        <taxon>Insecta</taxon>
        <taxon>Pterygota</taxon>
        <taxon>Neoptera</taxon>
        <taxon>Endopterygota</taxon>
        <taxon>Diptera</taxon>
        <taxon>Brachycera</taxon>
        <taxon>Muscomorpha</taxon>
        <taxon>Ephydroidea</taxon>
        <taxon>Drosophilidae</taxon>
        <taxon>Drosophila</taxon>
        <taxon>Sophophora</taxon>
    </lineage>
</organism>
<reference key="1">
    <citation type="journal article" date="2000" name="Science">
        <title>The genome sequence of Drosophila melanogaster.</title>
        <authorList>
            <person name="Adams M.D."/>
            <person name="Celniker S.E."/>
            <person name="Holt R.A."/>
            <person name="Evans C.A."/>
            <person name="Gocayne J.D."/>
            <person name="Amanatides P.G."/>
            <person name="Scherer S.E."/>
            <person name="Li P.W."/>
            <person name="Hoskins R.A."/>
            <person name="Galle R.F."/>
            <person name="George R.A."/>
            <person name="Lewis S.E."/>
            <person name="Richards S."/>
            <person name="Ashburner M."/>
            <person name="Henderson S.N."/>
            <person name="Sutton G.G."/>
            <person name="Wortman J.R."/>
            <person name="Yandell M.D."/>
            <person name="Zhang Q."/>
            <person name="Chen L.X."/>
            <person name="Brandon R.C."/>
            <person name="Rogers Y.-H.C."/>
            <person name="Blazej R.G."/>
            <person name="Champe M."/>
            <person name="Pfeiffer B.D."/>
            <person name="Wan K.H."/>
            <person name="Doyle C."/>
            <person name="Baxter E.G."/>
            <person name="Helt G."/>
            <person name="Nelson C.R."/>
            <person name="Miklos G.L.G."/>
            <person name="Abril J.F."/>
            <person name="Agbayani A."/>
            <person name="An H.-J."/>
            <person name="Andrews-Pfannkoch C."/>
            <person name="Baldwin D."/>
            <person name="Ballew R.M."/>
            <person name="Basu A."/>
            <person name="Baxendale J."/>
            <person name="Bayraktaroglu L."/>
            <person name="Beasley E.M."/>
            <person name="Beeson K.Y."/>
            <person name="Benos P.V."/>
            <person name="Berman B.P."/>
            <person name="Bhandari D."/>
            <person name="Bolshakov S."/>
            <person name="Borkova D."/>
            <person name="Botchan M.R."/>
            <person name="Bouck J."/>
            <person name="Brokstein P."/>
            <person name="Brottier P."/>
            <person name="Burtis K.C."/>
            <person name="Busam D.A."/>
            <person name="Butler H."/>
            <person name="Cadieu E."/>
            <person name="Center A."/>
            <person name="Chandra I."/>
            <person name="Cherry J.M."/>
            <person name="Cawley S."/>
            <person name="Dahlke C."/>
            <person name="Davenport L.B."/>
            <person name="Davies P."/>
            <person name="de Pablos B."/>
            <person name="Delcher A."/>
            <person name="Deng Z."/>
            <person name="Mays A.D."/>
            <person name="Dew I."/>
            <person name="Dietz S.M."/>
            <person name="Dodson K."/>
            <person name="Doup L.E."/>
            <person name="Downes M."/>
            <person name="Dugan-Rocha S."/>
            <person name="Dunkov B.C."/>
            <person name="Dunn P."/>
            <person name="Durbin K.J."/>
            <person name="Evangelista C.C."/>
            <person name="Ferraz C."/>
            <person name="Ferriera S."/>
            <person name="Fleischmann W."/>
            <person name="Fosler C."/>
            <person name="Gabrielian A.E."/>
            <person name="Garg N.S."/>
            <person name="Gelbart W.M."/>
            <person name="Glasser K."/>
            <person name="Glodek A."/>
            <person name="Gong F."/>
            <person name="Gorrell J.H."/>
            <person name="Gu Z."/>
            <person name="Guan P."/>
            <person name="Harris M."/>
            <person name="Harris N.L."/>
            <person name="Harvey D.A."/>
            <person name="Heiman T.J."/>
            <person name="Hernandez J.R."/>
            <person name="Houck J."/>
            <person name="Hostin D."/>
            <person name="Houston K.A."/>
            <person name="Howland T.J."/>
            <person name="Wei M.-H."/>
            <person name="Ibegwam C."/>
            <person name="Jalali M."/>
            <person name="Kalush F."/>
            <person name="Karpen G.H."/>
            <person name="Ke Z."/>
            <person name="Kennison J.A."/>
            <person name="Ketchum K.A."/>
            <person name="Kimmel B.E."/>
            <person name="Kodira C.D."/>
            <person name="Kraft C.L."/>
            <person name="Kravitz S."/>
            <person name="Kulp D."/>
            <person name="Lai Z."/>
            <person name="Lasko P."/>
            <person name="Lei Y."/>
            <person name="Levitsky A.A."/>
            <person name="Li J.H."/>
            <person name="Li Z."/>
            <person name="Liang Y."/>
            <person name="Lin X."/>
            <person name="Liu X."/>
            <person name="Mattei B."/>
            <person name="McIntosh T.C."/>
            <person name="McLeod M.P."/>
            <person name="McPherson D."/>
            <person name="Merkulov G."/>
            <person name="Milshina N.V."/>
            <person name="Mobarry C."/>
            <person name="Morris J."/>
            <person name="Moshrefi A."/>
            <person name="Mount S.M."/>
            <person name="Moy M."/>
            <person name="Murphy B."/>
            <person name="Murphy L."/>
            <person name="Muzny D.M."/>
            <person name="Nelson D.L."/>
            <person name="Nelson D.R."/>
            <person name="Nelson K.A."/>
            <person name="Nixon K."/>
            <person name="Nusskern D.R."/>
            <person name="Pacleb J.M."/>
            <person name="Palazzolo M."/>
            <person name="Pittman G.S."/>
            <person name="Pan S."/>
            <person name="Pollard J."/>
            <person name="Puri V."/>
            <person name="Reese M.G."/>
            <person name="Reinert K."/>
            <person name="Remington K."/>
            <person name="Saunders R.D.C."/>
            <person name="Scheeler F."/>
            <person name="Shen H."/>
            <person name="Shue B.C."/>
            <person name="Siden-Kiamos I."/>
            <person name="Simpson M."/>
            <person name="Skupski M.P."/>
            <person name="Smith T.J."/>
            <person name="Spier E."/>
            <person name="Spradling A.C."/>
            <person name="Stapleton M."/>
            <person name="Strong R."/>
            <person name="Sun E."/>
            <person name="Svirskas R."/>
            <person name="Tector C."/>
            <person name="Turner R."/>
            <person name="Venter E."/>
            <person name="Wang A.H."/>
            <person name="Wang X."/>
            <person name="Wang Z.-Y."/>
            <person name="Wassarman D.A."/>
            <person name="Weinstock G.M."/>
            <person name="Weissenbach J."/>
            <person name="Williams S.M."/>
            <person name="Woodage T."/>
            <person name="Worley K.C."/>
            <person name="Wu D."/>
            <person name="Yang S."/>
            <person name="Yao Q.A."/>
            <person name="Ye J."/>
            <person name="Yeh R.-F."/>
            <person name="Zaveri J.S."/>
            <person name="Zhan M."/>
            <person name="Zhang G."/>
            <person name="Zhao Q."/>
            <person name="Zheng L."/>
            <person name="Zheng X.H."/>
            <person name="Zhong F.N."/>
            <person name="Zhong W."/>
            <person name="Zhou X."/>
            <person name="Zhu S.C."/>
            <person name="Zhu X."/>
            <person name="Smith H.O."/>
            <person name="Gibbs R.A."/>
            <person name="Myers E.W."/>
            <person name="Rubin G.M."/>
            <person name="Venter J.C."/>
        </authorList>
    </citation>
    <scope>NUCLEOTIDE SEQUENCE [LARGE SCALE GENOMIC DNA]</scope>
    <source>
        <strain>Berkeley</strain>
    </source>
</reference>
<reference key="2">
    <citation type="journal article" date="2002" name="Genome Biol.">
        <title>Annotation of the Drosophila melanogaster euchromatic genome: a systematic review.</title>
        <authorList>
            <person name="Misra S."/>
            <person name="Crosby M.A."/>
            <person name="Mungall C.J."/>
            <person name="Matthews B.B."/>
            <person name="Campbell K.S."/>
            <person name="Hradecky P."/>
            <person name="Huang Y."/>
            <person name="Kaminker J.S."/>
            <person name="Millburn G.H."/>
            <person name="Prochnik S.E."/>
            <person name="Smith C.D."/>
            <person name="Tupy J.L."/>
            <person name="Whitfield E.J."/>
            <person name="Bayraktaroglu L."/>
            <person name="Berman B.P."/>
            <person name="Bettencourt B.R."/>
            <person name="Celniker S.E."/>
            <person name="de Grey A.D.N.J."/>
            <person name="Drysdale R.A."/>
            <person name="Harris N.L."/>
            <person name="Richter J."/>
            <person name="Russo S."/>
            <person name="Schroeder A.J."/>
            <person name="Shu S.Q."/>
            <person name="Stapleton M."/>
            <person name="Yamada C."/>
            <person name="Ashburner M."/>
            <person name="Gelbart W.M."/>
            <person name="Rubin G.M."/>
            <person name="Lewis S.E."/>
        </authorList>
    </citation>
    <scope>GENOME REANNOTATION</scope>
    <source>
        <strain>Berkeley</strain>
    </source>
</reference>
<reference key="3">
    <citation type="journal article" date="2002" name="Genome Biol.">
        <title>A Drosophila full-length cDNA resource.</title>
        <authorList>
            <person name="Stapleton M."/>
            <person name="Carlson J.W."/>
            <person name="Brokstein P."/>
            <person name="Yu C."/>
            <person name="Champe M."/>
            <person name="George R.A."/>
            <person name="Guarin H."/>
            <person name="Kronmiller B."/>
            <person name="Pacleb J.M."/>
            <person name="Park S."/>
            <person name="Wan K.H."/>
            <person name="Rubin G.M."/>
            <person name="Celniker S.E."/>
        </authorList>
    </citation>
    <scope>NUCLEOTIDE SEQUENCE [LARGE SCALE MRNA]</scope>
    <source>
        <strain>Berkeley</strain>
        <tissue>Embryo</tissue>
    </source>
</reference>
<reference key="4">
    <citation type="journal article" date="1996" name="Mol. Gen. Genet.">
        <title>Cytochrome P450 gene clusters in Drosophila melanogaster.</title>
        <authorList>
            <person name="Dunkov B.C."/>
            <person name="Rodriguez-Arnaiz R."/>
            <person name="Pittendrigh B."/>
            <person name="ffrench-Constant R.H."/>
            <person name="Feyereisen R."/>
        </authorList>
    </citation>
    <scope>NUCLEOTIDE SEQUENCE OF 325-450</scope>
    <source>
        <strain>Oregon-R</strain>
    </source>
</reference>
<keyword id="KW-0256">Endoplasmic reticulum</keyword>
<keyword id="KW-0349">Heme</keyword>
<keyword id="KW-0408">Iron</keyword>
<keyword id="KW-0472">Membrane</keyword>
<keyword id="KW-0479">Metal-binding</keyword>
<keyword id="KW-0492">Microsome</keyword>
<keyword id="KW-0503">Monooxygenase</keyword>
<keyword id="KW-0560">Oxidoreductase</keyword>
<keyword id="KW-1185">Reference proteome</keyword>
<gene>
    <name type="primary">Cyp4p1</name>
    <name type="ORF">CG10842</name>
</gene>
<sequence length="513" mass="59433">MIILWLILALSALLYWLHRANKDYHILSFFTKRIRLKDGTPVEIIAPIAKGKTIFGNTLDLYGRDHAGVFNYSRERAKEMGTSYIEYVFGKAIYNIIDADSAENVLNHPNLITKGLVYNFLHPFLRTGLLTSTGKKWHARRKMLTPTFHFNILNQFQEIFKTESQKFLLQFEGQDEVTITLHDVIPRFTLNSICETAMGVKLDEMAEKGDRYRENFSQIEECFIRRLSNPLLWGDKLFEMFAAKDFASALDVVHRFSSEIIAKRRDLLKDELDKSSSTADDDGFVSKKRFAMLDTLIYAEKDGLIDHIGICEEVDTLMFEGYDTTSIGLIFGLMNMSLNPDKQELCYQEIQEHIDDDLSNLDVGQLNKLKYLEYFMKETTRLFPSVPIMGREAVQETELANGLILPKGAQITIHVFDIHRNAKYWDSPEEFRPERFLPENVQDRHTYAYVPFSAGQRNCIGKKYAMQEMKTLMVVLLKQFKVLKAIDPQKIVFHTGITLRTQDKIRVKLVRRT</sequence>
<evidence type="ECO:0000250" key="1"/>
<evidence type="ECO:0000305" key="2"/>
<feature type="chain" id="PRO_0000051845" description="Cytochrome P450 4p1">
    <location>
        <begin position="1"/>
        <end position="513"/>
    </location>
</feature>
<feature type="binding site" description="covalent" evidence="1">
    <location>
        <position position="320"/>
    </location>
    <ligand>
        <name>heme</name>
        <dbReference type="ChEBI" id="CHEBI:30413"/>
    </ligand>
</feature>
<feature type="binding site" description="axial binding residue" evidence="1">
    <location>
        <position position="459"/>
    </location>
    <ligand>
        <name>heme</name>
        <dbReference type="ChEBI" id="CHEBI:30413"/>
    </ligand>
    <ligandPart>
        <name>Fe</name>
        <dbReference type="ChEBI" id="CHEBI:18248"/>
    </ligandPart>
</feature>
<proteinExistence type="evidence at transcript level"/>
<comment type="function">
    <text evidence="1">May be involved in the metabolism of insect hormones and in the breakdown of synthetic insecticides.</text>
</comment>
<comment type="cofactor">
    <cofactor evidence="1">
        <name>heme</name>
        <dbReference type="ChEBI" id="CHEBI:30413"/>
    </cofactor>
</comment>
<comment type="subcellular location">
    <subcellularLocation>
        <location evidence="2">Endoplasmic reticulum membrane</location>
        <topology evidence="2">Peripheral membrane protein</topology>
    </subcellularLocation>
    <subcellularLocation>
        <location evidence="2">Microsome membrane</location>
        <topology evidence="2">Peripheral membrane protein</topology>
    </subcellularLocation>
</comment>
<comment type="similarity">
    <text evidence="2">Belongs to the cytochrome P450 family.</text>
</comment>